<keyword id="KW-0472">Membrane</keyword>
<keyword id="KW-0479">Metal-binding</keyword>
<keyword id="KW-1185">Reference proteome</keyword>
<keyword id="KW-0808">Transferase</keyword>
<keyword id="KW-0812">Transmembrane</keyword>
<keyword id="KW-1133">Transmembrane helix</keyword>
<keyword id="KW-0833">Ubl conjugation pathway</keyword>
<keyword id="KW-0862">Zinc</keyword>
<keyword id="KW-0863">Zinc-finger</keyword>
<name>ATL47_ARATH</name>
<feature type="chain" id="PRO_0000055763" description="RING-H2 finger protein ATL47">
    <location>
        <begin position="1"/>
        <end position="369"/>
    </location>
</feature>
<feature type="transmembrane region" description="Helical" evidence="2">
    <location>
        <begin position="52"/>
        <end position="72"/>
    </location>
</feature>
<feature type="zinc finger region" description="RING-type; atypical" evidence="3">
    <location>
        <begin position="144"/>
        <end position="186"/>
    </location>
</feature>
<feature type="region of interest" description="Disordered" evidence="4">
    <location>
        <begin position="332"/>
        <end position="355"/>
    </location>
</feature>
<feature type="compositionally biased region" description="Low complexity" evidence="4">
    <location>
        <begin position="341"/>
        <end position="355"/>
    </location>
</feature>
<accession>Q8GW38</accession>
<accession>Q9LR95</accession>
<evidence type="ECO:0000250" key="1"/>
<evidence type="ECO:0000255" key="2"/>
<evidence type="ECO:0000255" key="3">
    <source>
        <dbReference type="PROSITE-ProRule" id="PRU00175"/>
    </source>
</evidence>
<evidence type="ECO:0000256" key="4">
    <source>
        <dbReference type="SAM" id="MobiDB-lite"/>
    </source>
</evidence>
<evidence type="ECO:0000305" key="5"/>
<gene>
    <name type="primary">ATL47</name>
    <name type="ordered locus">At1g23980</name>
    <name type="ORF">T23E23.15</name>
</gene>
<reference key="1">
    <citation type="journal article" date="2000" name="Nature">
        <title>Sequence and analysis of chromosome 1 of the plant Arabidopsis thaliana.</title>
        <authorList>
            <person name="Theologis A."/>
            <person name="Ecker J.R."/>
            <person name="Palm C.J."/>
            <person name="Federspiel N.A."/>
            <person name="Kaul S."/>
            <person name="White O."/>
            <person name="Alonso J."/>
            <person name="Altafi H."/>
            <person name="Araujo R."/>
            <person name="Bowman C.L."/>
            <person name="Brooks S.Y."/>
            <person name="Buehler E."/>
            <person name="Chan A."/>
            <person name="Chao Q."/>
            <person name="Chen H."/>
            <person name="Cheuk R.F."/>
            <person name="Chin C.W."/>
            <person name="Chung M.K."/>
            <person name="Conn L."/>
            <person name="Conway A.B."/>
            <person name="Conway A.R."/>
            <person name="Creasy T.H."/>
            <person name="Dewar K."/>
            <person name="Dunn P."/>
            <person name="Etgu P."/>
            <person name="Feldblyum T.V."/>
            <person name="Feng J.-D."/>
            <person name="Fong B."/>
            <person name="Fujii C.Y."/>
            <person name="Gill J.E."/>
            <person name="Goldsmith A.D."/>
            <person name="Haas B."/>
            <person name="Hansen N.F."/>
            <person name="Hughes B."/>
            <person name="Huizar L."/>
            <person name="Hunter J.L."/>
            <person name="Jenkins J."/>
            <person name="Johnson-Hopson C."/>
            <person name="Khan S."/>
            <person name="Khaykin E."/>
            <person name="Kim C.J."/>
            <person name="Koo H.L."/>
            <person name="Kremenetskaia I."/>
            <person name="Kurtz D.B."/>
            <person name="Kwan A."/>
            <person name="Lam B."/>
            <person name="Langin-Hooper S."/>
            <person name="Lee A."/>
            <person name="Lee J.M."/>
            <person name="Lenz C.A."/>
            <person name="Li J.H."/>
            <person name="Li Y.-P."/>
            <person name="Lin X."/>
            <person name="Liu S.X."/>
            <person name="Liu Z.A."/>
            <person name="Luros J.S."/>
            <person name="Maiti R."/>
            <person name="Marziali A."/>
            <person name="Militscher J."/>
            <person name="Miranda M."/>
            <person name="Nguyen M."/>
            <person name="Nierman W.C."/>
            <person name="Osborne B.I."/>
            <person name="Pai G."/>
            <person name="Peterson J."/>
            <person name="Pham P.K."/>
            <person name="Rizzo M."/>
            <person name="Rooney T."/>
            <person name="Rowley D."/>
            <person name="Sakano H."/>
            <person name="Salzberg S.L."/>
            <person name="Schwartz J.R."/>
            <person name="Shinn P."/>
            <person name="Southwick A.M."/>
            <person name="Sun H."/>
            <person name="Tallon L.J."/>
            <person name="Tambunga G."/>
            <person name="Toriumi M.J."/>
            <person name="Town C.D."/>
            <person name="Utterback T."/>
            <person name="Van Aken S."/>
            <person name="Vaysberg M."/>
            <person name="Vysotskaia V.S."/>
            <person name="Walker M."/>
            <person name="Wu D."/>
            <person name="Yu G."/>
            <person name="Fraser C.M."/>
            <person name="Venter J.C."/>
            <person name="Davis R.W."/>
        </authorList>
    </citation>
    <scope>NUCLEOTIDE SEQUENCE [LARGE SCALE GENOMIC DNA]</scope>
    <source>
        <strain>cv. Columbia</strain>
    </source>
</reference>
<reference key="2">
    <citation type="journal article" date="2017" name="Plant J.">
        <title>Araport11: a complete reannotation of the Arabidopsis thaliana reference genome.</title>
        <authorList>
            <person name="Cheng C.Y."/>
            <person name="Krishnakumar V."/>
            <person name="Chan A.P."/>
            <person name="Thibaud-Nissen F."/>
            <person name="Schobel S."/>
            <person name="Town C.D."/>
        </authorList>
    </citation>
    <scope>GENOME REANNOTATION</scope>
    <source>
        <strain>cv. Columbia</strain>
    </source>
</reference>
<reference key="3">
    <citation type="journal article" date="2002" name="Science">
        <title>Functional annotation of a full-length Arabidopsis cDNA collection.</title>
        <authorList>
            <person name="Seki M."/>
            <person name="Narusaka M."/>
            <person name="Kamiya A."/>
            <person name="Ishida J."/>
            <person name="Satou M."/>
            <person name="Sakurai T."/>
            <person name="Nakajima M."/>
            <person name="Enju A."/>
            <person name="Akiyama K."/>
            <person name="Oono Y."/>
            <person name="Muramatsu M."/>
            <person name="Hayashizaki Y."/>
            <person name="Kawai J."/>
            <person name="Carninci P."/>
            <person name="Itoh M."/>
            <person name="Ishii Y."/>
            <person name="Arakawa T."/>
            <person name="Shibata K."/>
            <person name="Shinagawa A."/>
            <person name="Shinozaki K."/>
        </authorList>
    </citation>
    <scope>NUCLEOTIDE SEQUENCE [LARGE SCALE MRNA]</scope>
    <source>
        <strain>cv. Columbia</strain>
    </source>
</reference>
<reference key="4">
    <citation type="journal article" date="2003" name="Science">
        <title>Empirical analysis of transcriptional activity in the Arabidopsis genome.</title>
        <authorList>
            <person name="Yamada K."/>
            <person name="Lim J."/>
            <person name="Dale J.M."/>
            <person name="Chen H."/>
            <person name="Shinn P."/>
            <person name="Palm C.J."/>
            <person name="Southwick A.M."/>
            <person name="Wu H.C."/>
            <person name="Kim C.J."/>
            <person name="Nguyen M."/>
            <person name="Pham P.K."/>
            <person name="Cheuk R.F."/>
            <person name="Karlin-Newmann G."/>
            <person name="Liu S.X."/>
            <person name="Lam B."/>
            <person name="Sakano H."/>
            <person name="Wu T."/>
            <person name="Yu G."/>
            <person name="Miranda M."/>
            <person name="Quach H.L."/>
            <person name="Tripp M."/>
            <person name="Chang C.H."/>
            <person name="Lee J.M."/>
            <person name="Toriumi M.J."/>
            <person name="Chan M.M."/>
            <person name="Tang C.C."/>
            <person name="Onodera C.S."/>
            <person name="Deng J.M."/>
            <person name="Akiyama K."/>
            <person name="Ansari Y."/>
            <person name="Arakawa T."/>
            <person name="Banh J."/>
            <person name="Banno F."/>
            <person name="Bowser L."/>
            <person name="Brooks S.Y."/>
            <person name="Carninci P."/>
            <person name="Chao Q."/>
            <person name="Choy N."/>
            <person name="Enju A."/>
            <person name="Goldsmith A.D."/>
            <person name="Gurjal M."/>
            <person name="Hansen N.F."/>
            <person name="Hayashizaki Y."/>
            <person name="Johnson-Hopson C."/>
            <person name="Hsuan V.W."/>
            <person name="Iida K."/>
            <person name="Karnes M."/>
            <person name="Khan S."/>
            <person name="Koesema E."/>
            <person name="Ishida J."/>
            <person name="Jiang P.X."/>
            <person name="Jones T."/>
            <person name="Kawai J."/>
            <person name="Kamiya A."/>
            <person name="Meyers C."/>
            <person name="Nakajima M."/>
            <person name="Narusaka M."/>
            <person name="Seki M."/>
            <person name="Sakurai T."/>
            <person name="Satou M."/>
            <person name="Tamse R."/>
            <person name="Vaysberg M."/>
            <person name="Wallender E.K."/>
            <person name="Wong C."/>
            <person name="Yamamura Y."/>
            <person name="Yuan S."/>
            <person name="Shinozaki K."/>
            <person name="Davis R.W."/>
            <person name="Theologis A."/>
            <person name="Ecker J.R."/>
        </authorList>
    </citation>
    <scope>NUCLEOTIDE SEQUENCE [LARGE SCALE MRNA]</scope>
    <source>
        <strain>cv. Columbia</strain>
    </source>
</reference>
<reference key="5">
    <citation type="journal article" date="2002" name="Genome Biol.">
        <title>Evaluation and classification of RING-finger domains encoded by the Arabidopsis genome.</title>
        <authorList>
            <person name="Kosarev P."/>
            <person name="Mayer K.F.X."/>
            <person name="Hardtke C.S."/>
        </authorList>
    </citation>
    <scope>GENE FAMILY ORGANIZATION</scope>
</reference>
<reference key="6">
    <citation type="journal article" date="2006" name="J. Mol. Evol.">
        <title>The ATL gene family from Arabidopsis thaliana and Oryza sativa comprises a large number of putative ubiquitin ligases of the RING-H2 type.</title>
        <authorList>
            <person name="Serrano M."/>
            <person name="Parra S."/>
            <person name="Alcaraz L.D."/>
            <person name="Guzman P."/>
        </authorList>
    </citation>
    <scope>NOMENCLATURE</scope>
    <scope>GENE FAMILY ORGANIZATION</scope>
</reference>
<sequence>MSERRIHYSQLKNDNLNQISPSSAPSPITLNHQLTDSSSSSSSGGNNRISPIILFIIVLLSVIFFICSILHLLVRYYLKKKRSNLSSSPNESNQNPEFSDSDTYQRQLQQLFHLHDSGLDQALIDALPVFLYKEIKGTKEPFDCAVCLCEFSEDDKLRLLPNCSHAFHIDCIDTWLLSNSTCPLCRGTLFSLGHQFEYPDFNFGFFAGDDGGGGVRVSPVQKPAENEIGKRVFSVRLGKFRSSNIVNNGEVVVGGGGETSSSSLDNRRCFSMGSYQYIVAESDLVVALCPNNEGLKNNKDVEGKKINMRSKGESFSVSKIWQWSNKRSKFPNNHPSETNLVVGGSSSSSSYVCSGSDGLSLNGRRFQGP</sequence>
<organism>
    <name type="scientific">Arabidopsis thaliana</name>
    <name type="common">Mouse-ear cress</name>
    <dbReference type="NCBI Taxonomy" id="3702"/>
    <lineage>
        <taxon>Eukaryota</taxon>
        <taxon>Viridiplantae</taxon>
        <taxon>Streptophyta</taxon>
        <taxon>Embryophyta</taxon>
        <taxon>Tracheophyta</taxon>
        <taxon>Spermatophyta</taxon>
        <taxon>Magnoliopsida</taxon>
        <taxon>eudicotyledons</taxon>
        <taxon>Gunneridae</taxon>
        <taxon>Pentapetalae</taxon>
        <taxon>rosids</taxon>
        <taxon>malvids</taxon>
        <taxon>Brassicales</taxon>
        <taxon>Brassicaceae</taxon>
        <taxon>Camelineae</taxon>
        <taxon>Arabidopsis</taxon>
    </lineage>
</organism>
<proteinExistence type="evidence at transcript level"/>
<comment type="catalytic activity">
    <reaction evidence="5">
        <text>S-ubiquitinyl-[E2 ubiquitin-conjugating enzyme]-L-cysteine + [acceptor protein]-L-lysine = [E2 ubiquitin-conjugating enzyme]-L-cysteine + N(6)-ubiquitinyl-[acceptor protein]-L-lysine.</text>
        <dbReference type="EC" id="2.3.2.27"/>
    </reaction>
</comment>
<comment type="pathway">
    <text>Protein modification; protein ubiquitination.</text>
</comment>
<comment type="subcellular location">
    <subcellularLocation>
        <location evidence="5">Membrane</location>
        <topology evidence="5">Single-pass membrane protein</topology>
    </subcellularLocation>
</comment>
<comment type="domain">
    <text evidence="1">The RING-type zinc finger domain mediates binding to an E2 ubiquitin-conjugating enzyme.</text>
</comment>
<comment type="similarity">
    <text evidence="5">Belongs to the RING-type zinc finger family. ATL subfamily.</text>
</comment>
<comment type="sequence caution" evidence="5">
    <conflict type="erroneous gene model prediction">
        <sequence resource="EMBL-CDS" id="AAF87153"/>
    </conflict>
</comment>
<protein>
    <recommendedName>
        <fullName>RING-H2 finger protein ATL47</fullName>
        <ecNumber evidence="5">2.3.2.27</ecNumber>
    </recommendedName>
    <alternativeName>
        <fullName evidence="5">RING-type E3 ubiquitin transferase ATL47</fullName>
    </alternativeName>
</protein>
<dbReference type="EC" id="2.3.2.27" evidence="5"/>
<dbReference type="EMBL" id="AC002423">
    <property type="protein sequence ID" value="AAF87153.1"/>
    <property type="status" value="ALT_SEQ"/>
    <property type="molecule type" value="Genomic_DNA"/>
</dbReference>
<dbReference type="EMBL" id="CP002684">
    <property type="protein sequence ID" value="AEE30463.1"/>
    <property type="molecule type" value="Genomic_DNA"/>
</dbReference>
<dbReference type="EMBL" id="AK119101">
    <property type="protein sequence ID" value="BAC43674.1"/>
    <property type="molecule type" value="mRNA"/>
</dbReference>
<dbReference type="EMBL" id="BT010323">
    <property type="protein sequence ID" value="AAQ55274.1"/>
    <property type="molecule type" value="mRNA"/>
</dbReference>
<dbReference type="RefSeq" id="NP_173809.1">
    <property type="nucleotide sequence ID" value="NM_102245.2"/>
</dbReference>
<dbReference type="SMR" id="Q8GW38"/>
<dbReference type="BioGRID" id="24248">
    <property type="interactions" value="1"/>
</dbReference>
<dbReference type="STRING" id="3702.Q8GW38"/>
<dbReference type="iPTMnet" id="Q8GW38"/>
<dbReference type="PaxDb" id="3702-AT1G23980.1"/>
<dbReference type="EnsemblPlants" id="AT1G23980.1">
    <property type="protein sequence ID" value="AT1G23980.1"/>
    <property type="gene ID" value="AT1G23980"/>
</dbReference>
<dbReference type="GeneID" id="839010"/>
<dbReference type="Gramene" id="AT1G23980.1">
    <property type="protein sequence ID" value="AT1G23980.1"/>
    <property type="gene ID" value="AT1G23980"/>
</dbReference>
<dbReference type="KEGG" id="ath:AT1G23980"/>
<dbReference type="Araport" id="AT1G23980"/>
<dbReference type="TAIR" id="AT1G23980">
    <property type="gene designation" value="ATL47"/>
</dbReference>
<dbReference type="eggNOG" id="KOG0800">
    <property type="taxonomic scope" value="Eukaryota"/>
</dbReference>
<dbReference type="HOGENOM" id="CLU_034332_1_0_1"/>
<dbReference type="InParanoid" id="Q8GW38"/>
<dbReference type="OMA" id="SQICHSS"/>
<dbReference type="OrthoDB" id="8062037at2759"/>
<dbReference type="PhylomeDB" id="Q8GW38"/>
<dbReference type="UniPathway" id="UPA00143"/>
<dbReference type="PRO" id="PR:Q8GW38"/>
<dbReference type="Proteomes" id="UP000006548">
    <property type="component" value="Chromosome 1"/>
</dbReference>
<dbReference type="ExpressionAtlas" id="Q8GW38">
    <property type="expression patterns" value="baseline and differential"/>
</dbReference>
<dbReference type="GO" id="GO:0016020">
    <property type="term" value="C:membrane"/>
    <property type="evidence" value="ECO:0007669"/>
    <property type="project" value="UniProtKB-SubCell"/>
</dbReference>
<dbReference type="GO" id="GO:0016740">
    <property type="term" value="F:transferase activity"/>
    <property type="evidence" value="ECO:0007669"/>
    <property type="project" value="UniProtKB-KW"/>
</dbReference>
<dbReference type="GO" id="GO:0008270">
    <property type="term" value="F:zinc ion binding"/>
    <property type="evidence" value="ECO:0007669"/>
    <property type="project" value="UniProtKB-KW"/>
</dbReference>
<dbReference type="GO" id="GO:0016567">
    <property type="term" value="P:protein ubiquitination"/>
    <property type="evidence" value="ECO:0007669"/>
    <property type="project" value="UniProtKB-UniPathway"/>
</dbReference>
<dbReference type="CDD" id="cd16461">
    <property type="entry name" value="RING-H2_EL5-like"/>
    <property type="match status" value="1"/>
</dbReference>
<dbReference type="FunFam" id="3.30.40.10:FF:000231">
    <property type="entry name" value="RING-H2 finger protein ATL46"/>
    <property type="match status" value="1"/>
</dbReference>
<dbReference type="Gene3D" id="3.30.40.10">
    <property type="entry name" value="Zinc/RING finger domain, C3HC4 (zinc finger)"/>
    <property type="match status" value="1"/>
</dbReference>
<dbReference type="InterPro" id="IPR001841">
    <property type="entry name" value="Znf_RING"/>
</dbReference>
<dbReference type="InterPro" id="IPR013083">
    <property type="entry name" value="Znf_RING/FYVE/PHD"/>
</dbReference>
<dbReference type="PANTHER" id="PTHR45768">
    <property type="entry name" value="E3 UBIQUITIN-PROTEIN LIGASE RNF13-LIKE"/>
    <property type="match status" value="1"/>
</dbReference>
<dbReference type="PANTHER" id="PTHR45768:SF18">
    <property type="entry name" value="RING-H2 FINGER PROTEIN ATL47-RELATED"/>
    <property type="match status" value="1"/>
</dbReference>
<dbReference type="Pfam" id="PF13639">
    <property type="entry name" value="zf-RING_2"/>
    <property type="match status" value="1"/>
</dbReference>
<dbReference type="SMART" id="SM00184">
    <property type="entry name" value="RING"/>
    <property type="match status" value="1"/>
</dbReference>
<dbReference type="SUPFAM" id="SSF57850">
    <property type="entry name" value="RING/U-box"/>
    <property type="match status" value="1"/>
</dbReference>
<dbReference type="PROSITE" id="PS50089">
    <property type="entry name" value="ZF_RING_2"/>
    <property type="match status" value="1"/>
</dbReference>